<keyword id="KW-0004">4Fe-4S</keyword>
<keyword id="KW-0067">ATP-binding</keyword>
<keyword id="KW-0149">Chlorophyll biosynthesis</keyword>
<keyword id="KW-0408">Iron</keyword>
<keyword id="KW-0411">Iron-sulfur</keyword>
<keyword id="KW-0479">Metal-binding</keyword>
<keyword id="KW-0547">Nucleotide-binding</keyword>
<keyword id="KW-0560">Oxidoreductase</keyword>
<keyword id="KW-0602">Photosynthesis</keyword>
<name>CHLB_SYNP6</name>
<feature type="chain" id="PRO_1000048426" description="Light-independent protochlorophyllide reductase subunit B">
    <location>
        <begin position="1"/>
        <end position="508"/>
    </location>
</feature>
<feature type="active site" description="Proton donor" evidence="1">
    <location>
        <position position="294"/>
    </location>
</feature>
<feature type="binding site" evidence="1">
    <location>
        <position position="36"/>
    </location>
    <ligand>
        <name>[4Fe-4S] cluster</name>
        <dbReference type="ChEBI" id="CHEBI:49883"/>
        <note>ligand shared with heterodimeric partner</note>
    </ligand>
</feature>
<feature type="binding site" evidence="1">
    <location>
        <begin position="429"/>
        <end position="430"/>
    </location>
    <ligand>
        <name>substrate</name>
    </ligand>
</feature>
<protein>
    <recommendedName>
        <fullName evidence="1">Light-independent protochlorophyllide reductase subunit B</fullName>
        <shortName evidence="1">DPOR subunit B</shortName>
        <shortName evidence="1">LI-POR subunit B</shortName>
        <ecNumber evidence="1">1.3.7.7</ecNumber>
    </recommendedName>
</protein>
<dbReference type="EC" id="1.3.7.7" evidence="1"/>
<dbReference type="EMBL" id="AP008231">
    <property type="protein sequence ID" value="BAD80446.1"/>
    <property type="molecule type" value="Genomic_DNA"/>
</dbReference>
<dbReference type="SMR" id="Q5MZS4"/>
<dbReference type="KEGG" id="syc:syc2256_d"/>
<dbReference type="eggNOG" id="COG2710">
    <property type="taxonomic scope" value="Bacteria"/>
</dbReference>
<dbReference type="UniPathway" id="UPA00670"/>
<dbReference type="Proteomes" id="UP000001175">
    <property type="component" value="Chromosome"/>
</dbReference>
<dbReference type="GO" id="GO:0051539">
    <property type="term" value="F:4 iron, 4 sulfur cluster binding"/>
    <property type="evidence" value="ECO:0007669"/>
    <property type="project" value="UniProtKB-UniRule"/>
</dbReference>
<dbReference type="GO" id="GO:0005524">
    <property type="term" value="F:ATP binding"/>
    <property type="evidence" value="ECO:0007669"/>
    <property type="project" value="UniProtKB-UniRule"/>
</dbReference>
<dbReference type="GO" id="GO:0046872">
    <property type="term" value="F:metal ion binding"/>
    <property type="evidence" value="ECO:0007669"/>
    <property type="project" value="UniProtKB-KW"/>
</dbReference>
<dbReference type="GO" id="GO:0016730">
    <property type="term" value="F:oxidoreductase activity, acting on iron-sulfur proteins as donors"/>
    <property type="evidence" value="ECO:0007669"/>
    <property type="project" value="InterPro"/>
</dbReference>
<dbReference type="GO" id="GO:0016636">
    <property type="term" value="F:oxidoreductase activity, acting on the CH-CH group of donors, iron-sulfur protein as acceptor"/>
    <property type="evidence" value="ECO:0007669"/>
    <property type="project" value="UniProtKB-UniRule"/>
</dbReference>
<dbReference type="GO" id="GO:0036068">
    <property type="term" value="P:light-independent chlorophyll biosynthetic process"/>
    <property type="evidence" value="ECO:0007669"/>
    <property type="project" value="UniProtKB-UniRule"/>
</dbReference>
<dbReference type="GO" id="GO:0019685">
    <property type="term" value="P:photosynthesis, dark reaction"/>
    <property type="evidence" value="ECO:0007669"/>
    <property type="project" value="InterPro"/>
</dbReference>
<dbReference type="CDD" id="cd01981">
    <property type="entry name" value="Pchlide_reductase_B"/>
    <property type="match status" value="1"/>
</dbReference>
<dbReference type="Gene3D" id="1.20.89.20">
    <property type="match status" value="1"/>
</dbReference>
<dbReference type="Gene3D" id="3.40.50.1980">
    <property type="entry name" value="Nitrogenase molybdenum iron protein domain"/>
    <property type="match status" value="3"/>
</dbReference>
<dbReference type="Gene3D" id="1.10.8.550">
    <property type="entry name" value="Proto-chlorophyllide reductase 57 kD subunit B"/>
    <property type="match status" value="1"/>
</dbReference>
<dbReference type="HAMAP" id="MF_00353">
    <property type="entry name" value="ChlB_BchB"/>
    <property type="match status" value="1"/>
</dbReference>
<dbReference type="InterPro" id="IPR050152">
    <property type="entry name" value="ChlB/BchB/BchZ"/>
</dbReference>
<dbReference type="InterPro" id="IPR013580">
    <property type="entry name" value="LI-POR_suB-like_C"/>
</dbReference>
<dbReference type="InterPro" id="IPR000510">
    <property type="entry name" value="Nase/OxRdtase_comp1"/>
</dbReference>
<dbReference type="InterPro" id="IPR042298">
    <property type="entry name" value="P-CP_red_C"/>
</dbReference>
<dbReference type="InterPro" id="IPR005969">
    <property type="entry name" value="Protochl_reductB"/>
</dbReference>
<dbReference type="InterPro" id="IPR016209">
    <property type="entry name" value="Protochlorophyllide_Rdtase"/>
</dbReference>
<dbReference type="NCBIfam" id="TIGR01278">
    <property type="entry name" value="DPOR_BchB"/>
    <property type="match status" value="1"/>
</dbReference>
<dbReference type="PANTHER" id="PTHR33712">
    <property type="entry name" value="LIGHT-INDEPENDENT PROTOCHLOROPHYLLIDE REDUCTASE SUBUNIT B"/>
    <property type="match status" value="1"/>
</dbReference>
<dbReference type="PANTHER" id="PTHR33712:SF7">
    <property type="entry name" value="LIGHT-INDEPENDENT PROTOCHLOROPHYLLIDE REDUCTASE SUBUNIT B"/>
    <property type="match status" value="1"/>
</dbReference>
<dbReference type="Pfam" id="PF00148">
    <property type="entry name" value="Oxidored_nitro"/>
    <property type="match status" value="1"/>
</dbReference>
<dbReference type="Pfam" id="PF08369">
    <property type="entry name" value="PCP_red"/>
    <property type="match status" value="1"/>
</dbReference>
<dbReference type="PIRSF" id="PIRSF000163">
    <property type="entry name" value="PCP_ChlB"/>
    <property type="match status" value="1"/>
</dbReference>
<dbReference type="SUPFAM" id="SSF53807">
    <property type="entry name" value="Helical backbone' metal receptor"/>
    <property type="match status" value="1"/>
</dbReference>
<reference key="1">
    <citation type="journal article" date="2007" name="Photosyn. Res.">
        <title>Complete nucleotide sequence of the freshwater unicellular cyanobacterium Synechococcus elongatus PCC 6301 chromosome: gene content and organization.</title>
        <authorList>
            <person name="Sugita C."/>
            <person name="Ogata K."/>
            <person name="Shikata M."/>
            <person name="Jikuya H."/>
            <person name="Takano J."/>
            <person name="Furumichi M."/>
            <person name="Kanehisa M."/>
            <person name="Omata T."/>
            <person name="Sugiura M."/>
            <person name="Sugita M."/>
        </authorList>
    </citation>
    <scope>NUCLEOTIDE SEQUENCE [LARGE SCALE GENOMIC DNA]</scope>
    <source>
        <strain>ATCC 27144 / PCC 6301 / SAUG 1402/1</strain>
    </source>
</reference>
<gene>
    <name evidence="1" type="primary">chlB</name>
    <name type="ordered locus">syc2256_d</name>
</gene>
<comment type="function">
    <text evidence="1">Component of the dark-operative protochlorophyllide reductase (DPOR) that uses Mg-ATP and reduced ferredoxin to reduce ring D of protochlorophyllide (Pchlide) to form chlorophyllide a (Chlide). This reaction is light-independent. The NB-protein (ChlN-ChlB) is the catalytic component of the complex.</text>
</comment>
<comment type="catalytic activity">
    <reaction evidence="1">
        <text>chlorophyllide a + oxidized 2[4Fe-4S]-[ferredoxin] + 2 ADP + 2 phosphate = protochlorophyllide a + reduced 2[4Fe-4S]-[ferredoxin] + 2 ATP + 2 H2O</text>
        <dbReference type="Rhea" id="RHEA:28202"/>
        <dbReference type="Rhea" id="RHEA-COMP:10002"/>
        <dbReference type="Rhea" id="RHEA-COMP:10004"/>
        <dbReference type="ChEBI" id="CHEBI:15377"/>
        <dbReference type="ChEBI" id="CHEBI:30616"/>
        <dbReference type="ChEBI" id="CHEBI:33722"/>
        <dbReference type="ChEBI" id="CHEBI:33723"/>
        <dbReference type="ChEBI" id="CHEBI:43474"/>
        <dbReference type="ChEBI" id="CHEBI:83348"/>
        <dbReference type="ChEBI" id="CHEBI:83350"/>
        <dbReference type="ChEBI" id="CHEBI:456216"/>
        <dbReference type="EC" id="1.3.7.7"/>
    </reaction>
</comment>
<comment type="cofactor">
    <cofactor evidence="1">
        <name>[4Fe-4S] cluster</name>
        <dbReference type="ChEBI" id="CHEBI:49883"/>
    </cofactor>
    <text evidence="1">Binds 1 [4Fe-4S] cluster per heterodimer. The cluster is bound at the heterodimer interface by residues from both subunits.</text>
</comment>
<comment type="pathway">
    <text evidence="1">Porphyrin-containing compound metabolism; chlorophyll biosynthesis (light-independent).</text>
</comment>
<comment type="subunit">
    <text evidence="1">Protochlorophyllide reductase is composed of three subunits; ChlL, ChlN and ChlB. Forms a heterotetramer of two ChlB and two ChlN subunits.</text>
</comment>
<comment type="similarity">
    <text evidence="1">Belongs to the ChlB/BchB/BchZ family.</text>
</comment>
<sequence length="508" mass="56643">MKLAYWMYAGPAHIGTLRISSSFRNVHAIMHAPLGDDYFNVMRSMLERERNFTPVTTSVVDRNVLARGSQEKVIDNILRKDTEERPDLIVLTPTCTSSILQEDLQNFVERAKESAQCDVLLADVNHYRVNELQAADRTLEQIVRFYLDRAQRQGTLPSQRTEQPSVNILGMTTLGFHNRHDTTELQRLMADLGITVNAVIPAGASVEELQHLPRAWFNLVPYREVGLLTAQYLQDTFDQPMVAIAPMGITATADCIRQIQQVLNQQGAAVDFEPFIDRQTRFASEAAWFSHSIDCQNLTGKRAVVFGDNTHAAAFTKILSREMGIHVVLAGTYCKHDADWFEAEVAGYCDRVLISDDHNAIADAIAELEPAAIFGTQMERHVGKRLNIPCGVIAAPVHIQNFPVGYRPFVGYEGANQIVDLVYNSFTLGMEDHLLEIFGGHDTKEVLTKTVSAGSDLDWKPDGLTELNRIPGFVRGKVKRNTEKYAREQGLTAITAEVLYAAKEALGA</sequence>
<organism>
    <name type="scientific">Synechococcus sp. (strain ATCC 27144 / PCC 6301 / SAUG 1402/1)</name>
    <name type="common">Anacystis nidulans</name>
    <dbReference type="NCBI Taxonomy" id="269084"/>
    <lineage>
        <taxon>Bacteria</taxon>
        <taxon>Bacillati</taxon>
        <taxon>Cyanobacteriota</taxon>
        <taxon>Cyanophyceae</taxon>
        <taxon>Synechococcales</taxon>
        <taxon>Synechococcaceae</taxon>
        <taxon>Synechococcus</taxon>
    </lineage>
</organism>
<accession>Q5MZS4</accession>
<proteinExistence type="inferred from homology"/>
<evidence type="ECO:0000255" key="1">
    <source>
        <dbReference type="HAMAP-Rule" id="MF_00353"/>
    </source>
</evidence>